<name>AMHM_ALKPO</name>
<accession>D3FSJ2</accession>
<accession>O50575</accession>
<feature type="chain" id="PRO_0000422713" description="Ammonium/H(+) antiporter subunit AmhM">
    <location>
        <begin position="1"/>
        <end position="167"/>
    </location>
</feature>
<feature type="domain" description="RCK C-terminal" evidence="2">
    <location>
        <begin position="79"/>
        <end position="163"/>
    </location>
</feature>
<sequence length="167" mass="18525">MKITSGDLPGVGKKISFITSEGSMVVLVIHHTGKREMYFFDDADDDEVSFSLTLSAEETKQMGAQLLGAILNPADTDKIDRIKLIRKQVVVEWIDITKHSPIISKSIAQIEKMKPKGISIVGVFKNDEMMVDPEPTLVLEKGDTLMAVGKRDAIQKFEELCACKENN</sequence>
<keyword id="KW-1003">Cell membrane</keyword>
<keyword id="KW-0472">Membrane</keyword>
<keyword id="KW-1185">Reference proteome</keyword>
<comment type="function">
    <text evidence="3 4">Modulates the activity of the ammonium/proton antiporter AmhT.</text>
</comment>
<comment type="subunit">
    <text evidence="5">Interacts with AmhT.</text>
</comment>
<comment type="subcellular location">
    <subcellularLocation>
        <location evidence="1">Cell membrane</location>
        <topology evidence="1">Peripheral membrane protein</topology>
        <orientation evidence="1">Cytoplasmic side</orientation>
    </subcellularLocation>
</comment>
<proteinExistence type="evidence at protein level"/>
<evidence type="ECO:0000250" key="1"/>
<evidence type="ECO:0000255" key="2">
    <source>
        <dbReference type="PROSITE-ProRule" id="PRU00544"/>
    </source>
</evidence>
<evidence type="ECO:0000269" key="3">
    <source>
    </source>
</evidence>
<evidence type="ECO:0000269" key="4">
    <source>
    </source>
</evidence>
<evidence type="ECO:0000305" key="5">
    <source>
    </source>
</evidence>
<protein>
    <recommendedName>
        <fullName>Ammonium/H(+) antiporter subunit AmhM</fullName>
    </recommendedName>
    <alternativeName>
        <fullName>Accessory protein for AmhT</fullName>
    </alternativeName>
</protein>
<gene>
    <name type="primary">amhM</name>
    <name type="ordered locus">BpOF4_09525</name>
</gene>
<organism>
    <name type="scientific">Alkalihalophilus pseudofirmus (strain ATCC BAA-2126 / JCM 17055 / OF4)</name>
    <name type="common">Bacillus pseudofirmus</name>
    <dbReference type="NCBI Taxonomy" id="398511"/>
    <lineage>
        <taxon>Bacteria</taxon>
        <taxon>Bacillati</taxon>
        <taxon>Bacillota</taxon>
        <taxon>Bacilli</taxon>
        <taxon>Bacillales</taxon>
        <taxon>Bacillaceae</taxon>
        <taxon>Alkalihalophilus</taxon>
    </lineage>
</organism>
<reference key="1">
    <citation type="journal article" date="2003" name="J. Bacteriol.">
        <title>Mutational loss of a K+ and NH4+ transporter affects the growth and endospore formation of alkaliphilic Bacillus pseudofirmus OF4.</title>
        <authorList>
            <person name="Wei Y."/>
            <person name="Southworth T.W."/>
            <person name="Kloster H."/>
            <person name="Ito M."/>
            <person name="Guffanti A.A."/>
            <person name="Moir A."/>
            <person name="Krulwich T.A."/>
        </authorList>
    </citation>
    <scope>NUCLEOTIDE SEQUENCE [GENOMIC DNA]</scope>
    <scope>FUNCTION</scope>
    <source>
        <strain>ATCC BAA-2126 / JCM 17055 / OF4</strain>
    </source>
</reference>
<reference key="2">
    <citation type="journal article" date="2011" name="Environ. Microbiol.">
        <title>Genome of alkaliphilic Bacillus pseudofirmus OF4 reveals adaptations that support the ability to grow in an external pH range from 7.5 to 11.4.</title>
        <authorList>
            <person name="Janto B."/>
            <person name="Ahmed A."/>
            <person name="Ito M."/>
            <person name="Liu J."/>
            <person name="Hicks D.B."/>
            <person name="Pagni S."/>
            <person name="Fackelmayer O.J."/>
            <person name="Smith T.A."/>
            <person name="Earl J."/>
            <person name="Elbourne L.D."/>
            <person name="Hassan K."/>
            <person name="Paulsen I.T."/>
            <person name="Kolsto A.B."/>
            <person name="Tourasse N.J."/>
            <person name="Ehrlich G.D."/>
            <person name="Boissy R."/>
            <person name="Ivey D.M."/>
            <person name="Li G."/>
            <person name="Xue Y."/>
            <person name="Ma Y."/>
            <person name="Hu F.Z."/>
            <person name="Krulwich T.A."/>
        </authorList>
    </citation>
    <scope>NUCLEOTIDE SEQUENCE [LARGE SCALE GENOMIC DNA]</scope>
    <source>
        <strain>ATCC BAA-2126 / JCM 17055 / OF4</strain>
    </source>
</reference>
<reference key="3">
    <citation type="journal article" date="2007" name="Proc. Natl. Acad. Sci. U.S.A.">
        <title>Three two-component transporters with channel-like properties have monovalent cation/proton antiport activity.</title>
        <authorList>
            <person name="Fujisawa M."/>
            <person name="Ito M."/>
            <person name="Krulwich T.A."/>
        </authorList>
    </citation>
    <scope>FUNCTION</scope>
    <scope>SUBUNIT</scope>
    <source>
        <strain>ATCC BAA-2126 / JCM 17055 / OF4</strain>
    </source>
</reference>
<dbReference type="EMBL" id="U89914">
    <property type="protein sequence ID" value="AAB87746.1"/>
    <property type="molecule type" value="Genomic_DNA"/>
</dbReference>
<dbReference type="EMBL" id="CP001878">
    <property type="protein sequence ID" value="ADC49960.1"/>
    <property type="molecule type" value="Genomic_DNA"/>
</dbReference>
<dbReference type="PIR" id="T52551">
    <property type="entry name" value="T52551"/>
</dbReference>
<dbReference type="RefSeq" id="WP_012957326.1">
    <property type="nucleotide sequence ID" value="NC_013791.2"/>
</dbReference>
<dbReference type="SMR" id="D3FSJ2"/>
<dbReference type="STRING" id="398511.BpOF4_09525"/>
<dbReference type="TCDB" id="2.A.37.5.1">
    <property type="family name" value="the monovalent cation:proton antiporter-2 (cpa2) family"/>
</dbReference>
<dbReference type="KEGG" id="bpf:BpOF4_09525"/>
<dbReference type="eggNOG" id="COG0490">
    <property type="taxonomic scope" value="Bacteria"/>
</dbReference>
<dbReference type="HOGENOM" id="CLU_116143_0_0_9"/>
<dbReference type="Proteomes" id="UP000001544">
    <property type="component" value="Chromosome"/>
</dbReference>
<dbReference type="GO" id="GO:0005886">
    <property type="term" value="C:plasma membrane"/>
    <property type="evidence" value="ECO:0007669"/>
    <property type="project" value="UniProtKB-SubCell"/>
</dbReference>
<dbReference type="GO" id="GO:0008324">
    <property type="term" value="F:monoatomic cation transmembrane transporter activity"/>
    <property type="evidence" value="ECO:0007669"/>
    <property type="project" value="InterPro"/>
</dbReference>
<dbReference type="GO" id="GO:0006813">
    <property type="term" value="P:potassium ion transport"/>
    <property type="evidence" value="ECO:0007669"/>
    <property type="project" value="InterPro"/>
</dbReference>
<dbReference type="Gene3D" id="3.30.70.1450">
    <property type="entry name" value="Regulator of K+ conductance, C-terminal domain"/>
    <property type="match status" value="1"/>
</dbReference>
<dbReference type="InterPro" id="IPR026278">
    <property type="entry name" value="K(+)/H(+)_antiporter_KhtT"/>
</dbReference>
<dbReference type="InterPro" id="IPR006037">
    <property type="entry name" value="RCK_C"/>
</dbReference>
<dbReference type="InterPro" id="IPR036721">
    <property type="entry name" value="RCK_C_sf"/>
</dbReference>
<dbReference type="InterPro" id="IPR050721">
    <property type="entry name" value="Trk_Ktr_HKT_K-transport"/>
</dbReference>
<dbReference type="PANTHER" id="PTHR43833:SF13">
    <property type="entry name" value="POTASSIUM CHANNEL PROTEIN 2-RELATED"/>
    <property type="match status" value="1"/>
</dbReference>
<dbReference type="PANTHER" id="PTHR43833">
    <property type="entry name" value="POTASSIUM CHANNEL PROTEIN 2-RELATED-RELATED"/>
    <property type="match status" value="1"/>
</dbReference>
<dbReference type="Pfam" id="PF02080">
    <property type="entry name" value="TrkA_C"/>
    <property type="match status" value="1"/>
</dbReference>
<dbReference type="PIRSF" id="PIRSF005028">
    <property type="entry name" value="KhtT"/>
    <property type="match status" value="1"/>
</dbReference>
<dbReference type="SUPFAM" id="SSF116726">
    <property type="entry name" value="TrkA C-terminal domain-like"/>
    <property type="match status" value="1"/>
</dbReference>
<dbReference type="PROSITE" id="PS51202">
    <property type="entry name" value="RCK_C"/>
    <property type="match status" value="1"/>
</dbReference>